<reference key="1">
    <citation type="journal article" date="2002" name="Nature">
        <title>The genome sequence of Schizosaccharomyces pombe.</title>
        <authorList>
            <person name="Wood V."/>
            <person name="Gwilliam R."/>
            <person name="Rajandream M.A."/>
            <person name="Lyne M.H."/>
            <person name="Lyne R."/>
            <person name="Stewart A."/>
            <person name="Sgouros J.G."/>
            <person name="Peat N."/>
            <person name="Hayles J."/>
            <person name="Baker S.G."/>
            <person name="Basham D."/>
            <person name="Bowman S."/>
            <person name="Brooks K."/>
            <person name="Brown D."/>
            <person name="Brown S."/>
            <person name="Chillingworth T."/>
            <person name="Churcher C.M."/>
            <person name="Collins M."/>
            <person name="Connor R."/>
            <person name="Cronin A."/>
            <person name="Davis P."/>
            <person name="Feltwell T."/>
            <person name="Fraser A."/>
            <person name="Gentles S."/>
            <person name="Goble A."/>
            <person name="Hamlin N."/>
            <person name="Harris D.E."/>
            <person name="Hidalgo J."/>
            <person name="Hodgson G."/>
            <person name="Holroyd S."/>
            <person name="Hornsby T."/>
            <person name="Howarth S."/>
            <person name="Huckle E.J."/>
            <person name="Hunt S."/>
            <person name="Jagels K."/>
            <person name="James K.D."/>
            <person name="Jones L."/>
            <person name="Jones M."/>
            <person name="Leather S."/>
            <person name="McDonald S."/>
            <person name="McLean J."/>
            <person name="Mooney P."/>
            <person name="Moule S."/>
            <person name="Mungall K.L."/>
            <person name="Murphy L.D."/>
            <person name="Niblett D."/>
            <person name="Odell C."/>
            <person name="Oliver K."/>
            <person name="O'Neil S."/>
            <person name="Pearson D."/>
            <person name="Quail M.A."/>
            <person name="Rabbinowitsch E."/>
            <person name="Rutherford K.M."/>
            <person name="Rutter S."/>
            <person name="Saunders D."/>
            <person name="Seeger K."/>
            <person name="Sharp S."/>
            <person name="Skelton J."/>
            <person name="Simmonds M.N."/>
            <person name="Squares R."/>
            <person name="Squares S."/>
            <person name="Stevens K."/>
            <person name="Taylor K."/>
            <person name="Taylor R.G."/>
            <person name="Tivey A."/>
            <person name="Walsh S.V."/>
            <person name="Warren T."/>
            <person name="Whitehead S."/>
            <person name="Woodward J.R."/>
            <person name="Volckaert G."/>
            <person name="Aert R."/>
            <person name="Robben J."/>
            <person name="Grymonprez B."/>
            <person name="Weltjens I."/>
            <person name="Vanstreels E."/>
            <person name="Rieger M."/>
            <person name="Schaefer M."/>
            <person name="Mueller-Auer S."/>
            <person name="Gabel C."/>
            <person name="Fuchs M."/>
            <person name="Duesterhoeft A."/>
            <person name="Fritzc C."/>
            <person name="Holzer E."/>
            <person name="Moestl D."/>
            <person name="Hilbert H."/>
            <person name="Borzym K."/>
            <person name="Langer I."/>
            <person name="Beck A."/>
            <person name="Lehrach H."/>
            <person name="Reinhardt R."/>
            <person name="Pohl T.M."/>
            <person name="Eger P."/>
            <person name="Zimmermann W."/>
            <person name="Wedler H."/>
            <person name="Wambutt R."/>
            <person name="Purnelle B."/>
            <person name="Goffeau A."/>
            <person name="Cadieu E."/>
            <person name="Dreano S."/>
            <person name="Gloux S."/>
            <person name="Lelaure V."/>
            <person name="Mottier S."/>
            <person name="Galibert F."/>
            <person name="Aves S.J."/>
            <person name="Xiang Z."/>
            <person name="Hunt C."/>
            <person name="Moore K."/>
            <person name="Hurst S.M."/>
            <person name="Lucas M."/>
            <person name="Rochet M."/>
            <person name="Gaillardin C."/>
            <person name="Tallada V.A."/>
            <person name="Garzon A."/>
            <person name="Thode G."/>
            <person name="Daga R.R."/>
            <person name="Cruzado L."/>
            <person name="Jimenez J."/>
            <person name="Sanchez M."/>
            <person name="del Rey F."/>
            <person name="Benito J."/>
            <person name="Dominguez A."/>
            <person name="Revuelta J.L."/>
            <person name="Moreno S."/>
            <person name="Armstrong J."/>
            <person name="Forsburg S.L."/>
            <person name="Cerutti L."/>
            <person name="Lowe T."/>
            <person name="McCombie W.R."/>
            <person name="Paulsen I."/>
            <person name="Potashkin J."/>
            <person name="Shpakovski G.V."/>
            <person name="Ussery D."/>
            <person name="Barrell B.G."/>
            <person name="Nurse P."/>
        </authorList>
    </citation>
    <scope>NUCLEOTIDE SEQUENCE [LARGE SCALE GENOMIC DNA]</scope>
    <source>
        <strain>972 / ATCC 24843</strain>
    </source>
</reference>
<reference key="2">
    <citation type="journal article" date="2011" name="Science">
        <title>Comparative functional genomics of the fission yeasts.</title>
        <authorList>
            <person name="Rhind N."/>
            <person name="Chen Z."/>
            <person name="Yassour M."/>
            <person name="Thompson D.A."/>
            <person name="Haas B.J."/>
            <person name="Habib N."/>
            <person name="Wapinski I."/>
            <person name="Roy S."/>
            <person name="Lin M.F."/>
            <person name="Heiman D.I."/>
            <person name="Young S.K."/>
            <person name="Furuya K."/>
            <person name="Guo Y."/>
            <person name="Pidoux A."/>
            <person name="Chen H.M."/>
            <person name="Robbertse B."/>
            <person name="Goldberg J.M."/>
            <person name="Aoki K."/>
            <person name="Bayne E.H."/>
            <person name="Berlin A.M."/>
            <person name="Desjardins C.A."/>
            <person name="Dobbs E."/>
            <person name="Dukaj L."/>
            <person name="Fan L."/>
            <person name="FitzGerald M.G."/>
            <person name="French C."/>
            <person name="Gujja S."/>
            <person name="Hansen K."/>
            <person name="Keifenheim D."/>
            <person name="Levin J.Z."/>
            <person name="Mosher R.A."/>
            <person name="Mueller C.A."/>
            <person name="Pfiffner J."/>
            <person name="Priest M."/>
            <person name="Russ C."/>
            <person name="Smialowska A."/>
            <person name="Swoboda P."/>
            <person name="Sykes S.M."/>
            <person name="Vaughn M."/>
            <person name="Vengrova S."/>
            <person name="Yoder R."/>
            <person name="Zeng Q."/>
            <person name="Allshire R."/>
            <person name="Baulcombe D."/>
            <person name="Birren B.W."/>
            <person name="Brown W."/>
            <person name="Ekwall K."/>
            <person name="Kellis M."/>
            <person name="Leatherwood J."/>
            <person name="Levin H."/>
            <person name="Margalit H."/>
            <person name="Martienssen R."/>
            <person name="Nieduszynski C.A."/>
            <person name="Spatafora J.W."/>
            <person name="Friedman N."/>
            <person name="Dalgaard J.Z."/>
            <person name="Baumann P."/>
            <person name="Niki H."/>
            <person name="Regev A."/>
            <person name="Nusbaum C."/>
        </authorList>
    </citation>
    <scope>IDENTIFICATION</scope>
</reference>
<organism>
    <name type="scientific">Schizosaccharomyces pombe (strain 972 / ATCC 24843)</name>
    <name type="common">Fission yeast</name>
    <dbReference type="NCBI Taxonomy" id="284812"/>
    <lineage>
        <taxon>Eukaryota</taxon>
        <taxon>Fungi</taxon>
        <taxon>Dikarya</taxon>
        <taxon>Ascomycota</taxon>
        <taxon>Taphrinomycotina</taxon>
        <taxon>Schizosaccharomycetes</taxon>
        <taxon>Schizosaccharomycetales</taxon>
        <taxon>Schizosaccharomycetaceae</taxon>
        <taxon>Schizosaccharomyces</taxon>
    </lineage>
</organism>
<proteinExistence type="predicted"/>
<gene>
    <name type="ORF">SPAC4H3.17</name>
</gene>
<sequence>MFGVSTFSLKKTLRFLFFFEFFSHFRVNCYMIFDINWRKFMLCWCNPNRTTIDNLQSFTVHCIHRNRLFYKSFILQFLGRKRIILQ</sequence>
<keyword id="KW-1185">Reference proteome</keyword>
<accession>G2TRM9</accession>
<protein>
    <recommendedName>
        <fullName>Putative uncharacterized protein C4H3.17</fullName>
    </recommendedName>
</protein>
<dbReference type="EMBL" id="CU329670">
    <property type="protein sequence ID" value="CCD31331.1"/>
    <property type="molecule type" value="Genomic_DNA"/>
</dbReference>
<dbReference type="RefSeq" id="XP_004001786.1">
    <property type="nucleotide sequence ID" value="XM_004001737.1"/>
</dbReference>
<dbReference type="iPTMnet" id="G2TRM9"/>
<dbReference type="PaxDb" id="4896-SPAC4H3.17.1"/>
<dbReference type="EnsemblFungi" id="SPAC4H3.17.1">
    <property type="protein sequence ID" value="SPAC4H3.17.1:pep"/>
    <property type="gene ID" value="SPAC4H3.17"/>
</dbReference>
<dbReference type="PomBase" id="SPAC4H3.17"/>
<dbReference type="VEuPathDB" id="FungiDB:SPAC4H3.17"/>
<dbReference type="HOGENOM" id="CLU_2499158_0_0_1"/>
<dbReference type="InParanoid" id="G2TRM9"/>
<dbReference type="PRO" id="PR:G2TRM9"/>
<dbReference type="Proteomes" id="UP000002485">
    <property type="component" value="Chromosome I"/>
</dbReference>
<feature type="chain" id="PRO_0000416618" description="Putative uncharacterized protein C4H3.17">
    <location>
        <begin position="1"/>
        <end position="86"/>
    </location>
</feature>
<name>YAYH_SCHPO</name>